<accession>Q03B00</accession>
<feature type="chain" id="PRO_0000289302" description="UPF0297 protein LSEI_0786">
    <location>
        <begin position="1"/>
        <end position="86"/>
    </location>
</feature>
<keyword id="KW-1185">Reference proteome</keyword>
<evidence type="ECO:0000255" key="1">
    <source>
        <dbReference type="HAMAP-Rule" id="MF_01507"/>
    </source>
</evidence>
<comment type="similarity">
    <text evidence="1">Belongs to the UPF0297 family.</text>
</comment>
<protein>
    <recommendedName>
        <fullName evidence="1">UPF0297 protein LSEI_0786</fullName>
    </recommendedName>
</protein>
<dbReference type="EMBL" id="CP000423">
    <property type="protein sequence ID" value="ABJ69622.1"/>
    <property type="molecule type" value="Genomic_DNA"/>
</dbReference>
<dbReference type="RefSeq" id="WP_003564007.1">
    <property type="nucleotide sequence ID" value="NC_008526.1"/>
</dbReference>
<dbReference type="RefSeq" id="YP_806064.1">
    <property type="nucleotide sequence ID" value="NC_008526.1"/>
</dbReference>
<dbReference type="SMR" id="Q03B00"/>
<dbReference type="STRING" id="321967.LSEI_0786"/>
<dbReference type="PaxDb" id="321967-LSEI_0786"/>
<dbReference type="KEGG" id="lca:LSEI_0786"/>
<dbReference type="PATRIC" id="fig|321967.11.peg.788"/>
<dbReference type="HOGENOM" id="CLU_162466_0_0_9"/>
<dbReference type="PRO" id="PR:Q03B00"/>
<dbReference type="Proteomes" id="UP000001651">
    <property type="component" value="Chromosome"/>
</dbReference>
<dbReference type="HAMAP" id="MF_01507">
    <property type="entry name" value="UPF0297"/>
    <property type="match status" value="1"/>
</dbReference>
<dbReference type="InterPro" id="IPR009309">
    <property type="entry name" value="IreB"/>
</dbReference>
<dbReference type="NCBIfam" id="NF003997">
    <property type="entry name" value="PRK05473.1"/>
    <property type="match status" value="1"/>
</dbReference>
<dbReference type="PANTHER" id="PTHR40067">
    <property type="entry name" value="UPF0297 PROTEIN YRZL"/>
    <property type="match status" value="1"/>
</dbReference>
<dbReference type="PANTHER" id="PTHR40067:SF1">
    <property type="entry name" value="UPF0297 PROTEIN YRZL"/>
    <property type="match status" value="1"/>
</dbReference>
<dbReference type="Pfam" id="PF06135">
    <property type="entry name" value="IreB"/>
    <property type="match status" value="1"/>
</dbReference>
<dbReference type="PIRSF" id="PIRSF037258">
    <property type="entry name" value="DUF965_bac"/>
    <property type="match status" value="1"/>
</dbReference>
<reference key="1">
    <citation type="journal article" date="2006" name="Proc. Natl. Acad. Sci. U.S.A.">
        <title>Comparative genomics of the lactic acid bacteria.</title>
        <authorList>
            <person name="Makarova K.S."/>
            <person name="Slesarev A."/>
            <person name="Wolf Y.I."/>
            <person name="Sorokin A."/>
            <person name="Mirkin B."/>
            <person name="Koonin E.V."/>
            <person name="Pavlov A."/>
            <person name="Pavlova N."/>
            <person name="Karamychev V."/>
            <person name="Polouchine N."/>
            <person name="Shakhova V."/>
            <person name="Grigoriev I."/>
            <person name="Lou Y."/>
            <person name="Rohksar D."/>
            <person name="Lucas S."/>
            <person name="Huang K."/>
            <person name="Goodstein D.M."/>
            <person name="Hawkins T."/>
            <person name="Plengvidhya V."/>
            <person name="Welker D."/>
            <person name="Hughes J."/>
            <person name="Goh Y."/>
            <person name="Benson A."/>
            <person name="Baldwin K."/>
            <person name="Lee J.-H."/>
            <person name="Diaz-Muniz I."/>
            <person name="Dosti B."/>
            <person name="Smeianov V."/>
            <person name="Wechter W."/>
            <person name="Barabote R."/>
            <person name="Lorca G."/>
            <person name="Altermann E."/>
            <person name="Barrangou R."/>
            <person name="Ganesan B."/>
            <person name="Xie Y."/>
            <person name="Rawsthorne H."/>
            <person name="Tamir D."/>
            <person name="Parker C."/>
            <person name="Breidt F."/>
            <person name="Broadbent J.R."/>
            <person name="Hutkins R."/>
            <person name="O'Sullivan D."/>
            <person name="Steele J."/>
            <person name="Unlu G."/>
            <person name="Saier M.H. Jr."/>
            <person name="Klaenhammer T."/>
            <person name="Richardson P."/>
            <person name="Kozyavkin S."/>
            <person name="Weimer B.C."/>
            <person name="Mills D.A."/>
        </authorList>
    </citation>
    <scope>NUCLEOTIDE SEQUENCE [LARGE SCALE GENOMIC DNA]</scope>
    <source>
        <strain>ATCC 334 / BCRC 17002 / CCUG 31169 / CIP 107868 / KCTC 3260 / NRRL B-441</strain>
    </source>
</reference>
<gene>
    <name type="ordered locus">LSEI_0786</name>
</gene>
<sequence length="86" mass="10121">MSTLDQTVHFDFRDNNPKNVHETLETVYKALEEKGYNPINQIVGYLISGDPAYIPRYNDARNLIRKHERDEIIEELVRNYLGKEQA</sequence>
<organism>
    <name type="scientific">Lacticaseibacillus paracasei (strain ATCC 334 / BCRC 17002 / CCUG 31169 / CIP 107868 / KCTC 3260 / NRRL B-441)</name>
    <name type="common">Lactobacillus paracasei</name>
    <dbReference type="NCBI Taxonomy" id="321967"/>
    <lineage>
        <taxon>Bacteria</taxon>
        <taxon>Bacillati</taxon>
        <taxon>Bacillota</taxon>
        <taxon>Bacilli</taxon>
        <taxon>Lactobacillales</taxon>
        <taxon>Lactobacillaceae</taxon>
        <taxon>Lacticaseibacillus</taxon>
    </lineage>
</organism>
<proteinExistence type="inferred from homology"/>
<name>Y786_LACP3</name>